<feature type="chain" id="PRO_0000368729" description="ATP synthase subunit b">
    <location>
        <begin position="1"/>
        <end position="163"/>
    </location>
</feature>
<feature type="transmembrane region" description="Helical" evidence="2">
    <location>
        <begin position="9"/>
        <end position="29"/>
    </location>
</feature>
<gene>
    <name evidence="2" type="primary">atpF</name>
    <name type="ordered locus">Rcas_1269</name>
</gene>
<reference key="1">
    <citation type="submission" date="2007-08" db="EMBL/GenBank/DDBJ databases">
        <title>Complete sequence of Roseiflexus castenholzii DSM 13941.</title>
        <authorList>
            <consortium name="US DOE Joint Genome Institute"/>
            <person name="Copeland A."/>
            <person name="Lucas S."/>
            <person name="Lapidus A."/>
            <person name="Barry K."/>
            <person name="Glavina del Rio T."/>
            <person name="Dalin E."/>
            <person name="Tice H."/>
            <person name="Pitluck S."/>
            <person name="Thompson L.S."/>
            <person name="Brettin T."/>
            <person name="Bruce D."/>
            <person name="Detter J.C."/>
            <person name="Han C."/>
            <person name="Tapia R."/>
            <person name="Schmutz J."/>
            <person name="Larimer F."/>
            <person name="Land M."/>
            <person name="Hauser L."/>
            <person name="Kyrpides N."/>
            <person name="Mikhailova N."/>
            <person name="Bryant D.A."/>
            <person name="Hanada S."/>
            <person name="Tsukatani Y."/>
            <person name="Richardson P."/>
        </authorList>
    </citation>
    <scope>NUCLEOTIDE SEQUENCE [LARGE SCALE GENOMIC DNA]</scope>
    <source>
        <strain>DSM 13941 / HLO8</strain>
    </source>
</reference>
<name>ATPF_ROSCS</name>
<sequence>MEKLGINWGLLIAQLINVVFVVWLLTTFLYRPILNMLNQRTNRIQEGLQDAERVREQLANAKRDYDAELAKARQEAASILAQAQERARAQAAEIIAQAHRDAEKIKSDTLAQAEQERQRMLGELKDRMAELVVLTAERVLNAELKANHDRLIEESLAELGKYN</sequence>
<comment type="function">
    <text evidence="2">F(1)F(0) ATP synthase produces ATP from ADP in the presence of a proton or sodium gradient. F-type ATPases consist of two structural domains, F(1) containing the extramembraneous catalytic core and F(0) containing the membrane proton channel, linked together by a central stalk and a peripheral stalk. During catalysis, ATP synthesis in the catalytic domain of F(1) is coupled via a rotary mechanism of the central stalk subunits to proton translocation.</text>
</comment>
<comment type="function">
    <text evidence="2">Component of the F(0) channel, it forms part of the peripheral stalk, linking F(1) to F(0).</text>
</comment>
<comment type="subunit">
    <text evidence="1">F-type ATPases have 2 components, F(1) - the catalytic core - and F(0) - the membrane proton channel. F(1) has five subunits: alpha(3), beta(3), gamma(1), delta(1), epsilon(1). F(0) has four main subunits: a(1), b(2) and c(10-14). The alpha and beta chains form an alternating ring which encloses part of the gamma chain. F(1) is attached to F(0) by a central stalk formed by the gamma and epsilon chains, while a peripheral stalk is formed by the delta and b chains (By similarity).</text>
</comment>
<comment type="subcellular location">
    <subcellularLocation>
        <location evidence="2">Cell membrane</location>
        <topology evidence="2">Single-pass membrane protein</topology>
    </subcellularLocation>
</comment>
<comment type="similarity">
    <text evidence="2">Belongs to the ATPase B chain family.</text>
</comment>
<protein>
    <recommendedName>
        <fullName evidence="2">ATP synthase subunit b</fullName>
    </recommendedName>
    <alternativeName>
        <fullName evidence="2">ATP synthase F(0) sector subunit b</fullName>
    </alternativeName>
    <alternativeName>
        <fullName evidence="2">ATPase subunit I</fullName>
    </alternativeName>
    <alternativeName>
        <fullName evidence="2">F-type ATPase subunit b</fullName>
        <shortName evidence="2">F-ATPase subunit b</shortName>
    </alternativeName>
</protein>
<proteinExistence type="inferred from homology"/>
<evidence type="ECO:0000250" key="1"/>
<evidence type="ECO:0000255" key="2">
    <source>
        <dbReference type="HAMAP-Rule" id="MF_01398"/>
    </source>
</evidence>
<accession>A7NIR3</accession>
<dbReference type="EMBL" id="CP000804">
    <property type="protein sequence ID" value="ABU57366.1"/>
    <property type="molecule type" value="Genomic_DNA"/>
</dbReference>
<dbReference type="RefSeq" id="WP_012119796.1">
    <property type="nucleotide sequence ID" value="NC_009767.1"/>
</dbReference>
<dbReference type="SMR" id="A7NIR3"/>
<dbReference type="STRING" id="383372.Rcas_1269"/>
<dbReference type="KEGG" id="rca:Rcas_1269"/>
<dbReference type="eggNOG" id="COG0711">
    <property type="taxonomic scope" value="Bacteria"/>
</dbReference>
<dbReference type="HOGENOM" id="CLU_079215_4_4_0"/>
<dbReference type="OrthoDB" id="163094at2"/>
<dbReference type="Proteomes" id="UP000000263">
    <property type="component" value="Chromosome"/>
</dbReference>
<dbReference type="GO" id="GO:0005886">
    <property type="term" value="C:plasma membrane"/>
    <property type="evidence" value="ECO:0007669"/>
    <property type="project" value="UniProtKB-SubCell"/>
</dbReference>
<dbReference type="GO" id="GO:0045259">
    <property type="term" value="C:proton-transporting ATP synthase complex"/>
    <property type="evidence" value="ECO:0007669"/>
    <property type="project" value="UniProtKB-KW"/>
</dbReference>
<dbReference type="GO" id="GO:0046933">
    <property type="term" value="F:proton-transporting ATP synthase activity, rotational mechanism"/>
    <property type="evidence" value="ECO:0007669"/>
    <property type="project" value="UniProtKB-UniRule"/>
</dbReference>
<dbReference type="GO" id="GO:0046961">
    <property type="term" value="F:proton-transporting ATPase activity, rotational mechanism"/>
    <property type="evidence" value="ECO:0007669"/>
    <property type="project" value="TreeGrafter"/>
</dbReference>
<dbReference type="CDD" id="cd06503">
    <property type="entry name" value="ATP-synt_Fo_b"/>
    <property type="match status" value="1"/>
</dbReference>
<dbReference type="Gene3D" id="6.10.250.1580">
    <property type="match status" value="1"/>
</dbReference>
<dbReference type="HAMAP" id="MF_01398">
    <property type="entry name" value="ATP_synth_b_bprime"/>
    <property type="match status" value="1"/>
</dbReference>
<dbReference type="InterPro" id="IPR028987">
    <property type="entry name" value="ATP_synth_B-like_membr_sf"/>
</dbReference>
<dbReference type="InterPro" id="IPR002146">
    <property type="entry name" value="ATP_synth_b/b'su_bac/chlpt"/>
</dbReference>
<dbReference type="InterPro" id="IPR005864">
    <property type="entry name" value="ATP_synth_F0_bsu_bac"/>
</dbReference>
<dbReference type="InterPro" id="IPR050059">
    <property type="entry name" value="ATP_synthase_B_chain"/>
</dbReference>
<dbReference type="NCBIfam" id="TIGR01144">
    <property type="entry name" value="ATP_synt_b"/>
    <property type="match status" value="1"/>
</dbReference>
<dbReference type="NCBIfam" id="NF011043">
    <property type="entry name" value="PRK14473.1"/>
    <property type="match status" value="1"/>
</dbReference>
<dbReference type="PANTHER" id="PTHR33445:SF1">
    <property type="entry name" value="ATP SYNTHASE SUBUNIT B"/>
    <property type="match status" value="1"/>
</dbReference>
<dbReference type="PANTHER" id="PTHR33445">
    <property type="entry name" value="ATP SYNTHASE SUBUNIT B', CHLOROPLASTIC"/>
    <property type="match status" value="1"/>
</dbReference>
<dbReference type="Pfam" id="PF00430">
    <property type="entry name" value="ATP-synt_B"/>
    <property type="match status" value="1"/>
</dbReference>
<dbReference type="SUPFAM" id="SSF81573">
    <property type="entry name" value="F1F0 ATP synthase subunit B, membrane domain"/>
    <property type="match status" value="1"/>
</dbReference>
<organism>
    <name type="scientific">Roseiflexus castenholzii (strain DSM 13941 / HLO8)</name>
    <dbReference type="NCBI Taxonomy" id="383372"/>
    <lineage>
        <taxon>Bacteria</taxon>
        <taxon>Bacillati</taxon>
        <taxon>Chloroflexota</taxon>
        <taxon>Chloroflexia</taxon>
        <taxon>Chloroflexales</taxon>
        <taxon>Roseiflexineae</taxon>
        <taxon>Roseiflexaceae</taxon>
        <taxon>Roseiflexus</taxon>
    </lineage>
</organism>
<keyword id="KW-0066">ATP synthesis</keyword>
<keyword id="KW-1003">Cell membrane</keyword>
<keyword id="KW-0138">CF(0)</keyword>
<keyword id="KW-0375">Hydrogen ion transport</keyword>
<keyword id="KW-0406">Ion transport</keyword>
<keyword id="KW-0472">Membrane</keyword>
<keyword id="KW-1185">Reference proteome</keyword>
<keyword id="KW-0812">Transmembrane</keyword>
<keyword id="KW-1133">Transmembrane helix</keyword>
<keyword id="KW-0813">Transport</keyword>